<protein>
    <recommendedName>
        <fullName evidence="1">Glycerol-3-phosphate acyltransferase</fullName>
    </recommendedName>
    <alternativeName>
        <fullName evidence="1">Acyl-PO4 G3P acyltransferase</fullName>
    </alternativeName>
    <alternativeName>
        <fullName evidence="1">Acyl-phosphate--glycerol-3-phosphate acyltransferase</fullName>
    </alternativeName>
    <alternativeName>
        <fullName evidence="1">G3P acyltransferase</fullName>
        <shortName evidence="1">GPAT</shortName>
        <ecNumber evidence="1">2.3.1.275</ecNumber>
    </alternativeName>
    <alternativeName>
        <fullName evidence="1">Lysophosphatidic acid synthase</fullName>
        <shortName evidence="1">LPA synthase</shortName>
    </alternativeName>
</protein>
<organism>
    <name type="scientific">Streptococcus pyogenes serotype M3 (strain SSI-1)</name>
    <dbReference type="NCBI Taxonomy" id="193567"/>
    <lineage>
        <taxon>Bacteria</taxon>
        <taxon>Bacillati</taxon>
        <taxon>Bacillota</taxon>
        <taxon>Bacilli</taxon>
        <taxon>Lactobacillales</taxon>
        <taxon>Streptococcaceae</taxon>
        <taxon>Streptococcus</taxon>
    </lineage>
</organism>
<dbReference type="EC" id="2.3.1.275" evidence="1"/>
<dbReference type="EMBL" id="BA000034">
    <property type="protein sequence ID" value="BAC64325.1"/>
    <property type="molecule type" value="Genomic_DNA"/>
</dbReference>
<dbReference type="RefSeq" id="WP_002984911.1">
    <property type="nucleotide sequence ID" value="NC_004606.1"/>
</dbReference>
<dbReference type="SMR" id="P0DD11"/>
<dbReference type="GeneID" id="69900991"/>
<dbReference type="KEGG" id="sps:SPs1230"/>
<dbReference type="HOGENOM" id="CLU_081254_3_0_9"/>
<dbReference type="UniPathway" id="UPA00085"/>
<dbReference type="GO" id="GO:0005886">
    <property type="term" value="C:plasma membrane"/>
    <property type="evidence" value="ECO:0007669"/>
    <property type="project" value="UniProtKB-SubCell"/>
</dbReference>
<dbReference type="GO" id="GO:0043772">
    <property type="term" value="F:acyl-phosphate glycerol-3-phosphate acyltransferase activity"/>
    <property type="evidence" value="ECO:0007669"/>
    <property type="project" value="UniProtKB-UniRule"/>
</dbReference>
<dbReference type="GO" id="GO:0008654">
    <property type="term" value="P:phospholipid biosynthetic process"/>
    <property type="evidence" value="ECO:0007669"/>
    <property type="project" value="UniProtKB-UniRule"/>
</dbReference>
<dbReference type="HAMAP" id="MF_01043">
    <property type="entry name" value="PlsY"/>
    <property type="match status" value="1"/>
</dbReference>
<dbReference type="InterPro" id="IPR003811">
    <property type="entry name" value="G3P_acylTferase_PlsY"/>
</dbReference>
<dbReference type="NCBIfam" id="TIGR00023">
    <property type="entry name" value="glycerol-3-phosphate 1-O-acyltransferase PlsY"/>
    <property type="match status" value="1"/>
</dbReference>
<dbReference type="PANTHER" id="PTHR30309:SF0">
    <property type="entry name" value="GLYCEROL-3-PHOSPHATE ACYLTRANSFERASE-RELATED"/>
    <property type="match status" value="1"/>
</dbReference>
<dbReference type="PANTHER" id="PTHR30309">
    <property type="entry name" value="INNER MEMBRANE PROTEIN YGIH"/>
    <property type="match status" value="1"/>
</dbReference>
<dbReference type="Pfam" id="PF02660">
    <property type="entry name" value="G3P_acyltransf"/>
    <property type="match status" value="1"/>
</dbReference>
<dbReference type="SMART" id="SM01207">
    <property type="entry name" value="G3P_acyltransf"/>
    <property type="match status" value="1"/>
</dbReference>
<gene>
    <name evidence="1" type="primary">plsY</name>
    <name type="ordered locus">SPs1230</name>
</gene>
<comment type="function">
    <text evidence="1">Catalyzes the transfer of an acyl group from acyl-phosphate (acyl-PO(4)) to glycerol-3-phosphate (G3P) to form lysophosphatidic acid (LPA). This enzyme utilizes acyl-phosphate as fatty acyl donor, but not acyl-CoA or acyl-ACP.</text>
</comment>
<comment type="catalytic activity">
    <reaction evidence="1">
        <text>an acyl phosphate + sn-glycerol 3-phosphate = a 1-acyl-sn-glycero-3-phosphate + phosphate</text>
        <dbReference type="Rhea" id="RHEA:34075"/>
        <dbReference type="ChEBI" id="CHEBI:43474"/>
        <dbReference type="ChEBI" id="CHEBI:57597"/>
        <dbReference type="ChEBI" id="CHEBI:57970"/>
        <dbReference type="ChEBI" id="CHEBI:59918"/>
        <dbReference type="EC" id="2.3.1.275"/>
    </reaction>
</comment>
<comment type="pathway">
    <text evidence="1">Lipid metabolism; phospholipid metabolism.</text>
</comment>
<comment type="subunit">
    <text evidence="1">Probably interacts with PlsX.</text>
</comment>
<comment type="subcellular location">
    <subcellularLocation>
        <location evidence="1">Cell membrane</location>
        <topology evidence="1">Multi-pass membrane protein</topology>
    </subcellularLocation>
</comment>
<comment type="similarity">
    <text evidence="1">Belongs to the PlsY family.</text>
</comment>
<reference key="1">
    <citation type="journal article" date="2003" name="Genome Res.">
        <title>Genome sequence of an M3 strain of Streptococcus pyogenes reveals a large-scale genomic rearrangement in invasive strains and new insights into phage evolution.</title>
        <authorList>
            <person name="Nakagawa I."/>
            <person name="Kurokawa K."/>
            <person name="Yamashita A."/>
            <person name="Nakata M."/>
            <person name="Tomiyasu Y."/>
            <person name="Okahashi N."/>
            <person name="Kawabata S."/>
            <person name="Yamazaki K."/>
            <person name="Shiba T."/>
            <person name="Yasunaga T."/>
            <person name="Hayashi H."/>
            <person name="Hattori M."/>
            <person name="Hamada S."/>
        </authorList>
    </citation>
    <scope>NUCLEOTIDE SEQUENCE [LARGE SCALE GENOMIC DNA]</scope>
    <source>
        <strain>SSI-1</strain>
    </source>
</reference>
<feature type="chain" id="PRO_0000411443" description="Glycerol-3-phosphate acyltransferase">
    <location>
        <begin position="1"/>
        <end position="213"/>
    </location>
</feature>
<feature type="transmembrane region" description="Helical" evidence="1">
    <location>
        <begin position="3"/>
        <end position="23"/>
    </location>
</feature>
<feature type="transmembrane region" description="Helical" evidence="1">
    <location>
        <begin position="68"/>
        <end position="88"/>
    </location>
</feature>
<feature type="transmembrane region" description="Helical" evidence="1">
    <location>
        <begin position="112"/>
        <end position="132"/>
    </location>
</feature>
<feature type="transmembrane region" description="Helical" evidence="1">
    <location>
        <begin position="134"/>
        <end position="154"/>
    </location>
</feature>
<feature type="transmembrane region" description="Helical" evidence="1">
    <location>
        <begin position="163"/>
        <end position="183"/>
    </location>
</feature>
<accession>P0DD11</accession>
<accession>P67169</accession>
<accession>Q8K7U8</accession>
<accession>Q9A070</accession>
<proteinExistence type="inferred from homology"/>
<evidence type="ECO:0000255" key="1">
    <source>
        <dbReference type="HAMAP-Rule" id="MF_01043"/>
    </source>
</evidence>
<keyword id="KW-1003">Cell membrane</keyword>
<keyword id="KW-0444">Lipid biosynthesis</keyword>
<keyword id="KW-0443">Lipid metabolism</keyword>
<keyword id="KW-0472">Membrane</keyword>
<keyword id="KW-0594">Phospholipid biosynthesis</keyword>
<keyword id="KW-1208">Phospholipid metabolism</keyword>
<keyword id="KW-0808">Transferase</keyword>
<keyword id="KW-0812">Transmembrane</keyword>
<keyword id="KW-1133">Transmembrane helix</keyword>
<name>PLSY_STRPQ</name>
<sequence>MKLLLFITIAYLLGSIPTGLWIGQYFYHINLREHGSGNTGTTNTFRILGVKAGTATLAIDMFKGTLSILLPIIFGMTSISSIAIGFFAVLGHTFPIFANFKGGKAVATSAGVLLGFAPLYLFFLASIFVLVLYLFSMISLASVVSAIVGVLSVLTFPAIHFLLPNYDYFLTFIVILLAFIIIIRHKDNISRIKHHTENLIPWGLNLSKQVPKK</sequence>